<accession>P31712</accession>
<sequence length="279" mass="31131">MDDLREFAQLFPAWWFGALGVLGLIVGSFLNVVIYRLPIMLERRWRQDIELETGVADPDTRYNLWWPPSSCPHCQQAIAVKDNIPLFSWLWLRGRSRCCHQSVSVQYPLVEVITMLAFLAAGLLWLPGMALWGALILLSFLLVLTVIDIKTLLLPDELTLSLLWMGLLFNLSGTFVSLNDAVVGAMAGYLSLWLLYWAFKYATGKEALGYGDFKLLAALGAWLGWQALPNLVLVAALSGLVVTLIWRGLRKEDTAKPLAFGPWLAIGGVFGMIMNGFNL</sequence>
<reference key="1">
    <citation type="journal article" date="1993" name="Mol. Microbiol.">
        <title>Molecular cloning and characterization of 13 out genes from Erwinia carotovora subspecies carotovora: genes encoding members of a general secretion pathway (GSP) widespread in Gram-negative bacteria.</title>
        <authorList>
            <person name="Reeves P.J."/>
            <person name="Whitcombe D."/>
            <person name="Wharam S."/>
            <person name="Gibson M."/>
            <person name="Allison G."/>
            <person name="Bunce N."/>
            <person name="Barallon R."/>
            <person name="Douglas P."/>
            <person name="Mulholland V."/>
            <person name="Stevens S."/>
            <person name="Walker S."/>
            <person name="Salmond G.P.C."/>
        </authorList>
    </citation>
    <scope>NUCLEOTIDE SEQUENCE [GENOMIC DNA]</scope>
    <source>
        <strain>SCRI 193</strain>
    </source>
</reference>
<reference key="2">
    <citation type="journal article" date="1994" name="Mol. Microbiol.">
        <title>Beta-lactamase topology probe analysis of the OutO NMePhe peptidase, and six other Out protein components of the Erwinia carotovora general secretion pathway apparatus.</title>
        <authorList>
            <person name="Reeves P.J."/>
            <person name="Douglas P."/>
            <person name="Salmond G.P.C."/>
        </authorList>
    </citation>
    <scope>TOPOLOGY</scope>
</reference>
<feature type="chain" id="PRO_0000192619" description="Prepilin leader peptidase/N-methyltransferase">
    <location>
        <begin position="1"/>
        <end position="279"/>
    </location>
</feature>
<feature type="topological domain" description="Periplasmic" evidence="3">
    <location>
        <begin position="1"/>
        <end position="16"/>
    </location>
</feature>
<feature type="transmembrane region" description="Helical" evidence="2">
    <location>
        <begin position="17"/>
        <end position="35"/>
    </location>
</feature>
<feature type="topological domain" description="Cytoplasmic" evidence="3">
    <location>
        <begin position="36"/>
        <end position="104"/>
    </location>
</feature>
<feature type="transmembrane region" description="Helical" evidence="2">
    <location>
        <begin position="105"/>
        <end position="123"/>
    </location>
</feature>
<feature type="topological domain" description="Periplasmic" evidence="3">
    <location>
        <begin position="124"/>
        <end position="130"/>
    </location>
</feature>
<feature type="transmembrane region" description="Helical" evidence="2">
    <location>
        <begin position="131"/>
        <end position="149"/>
    </location>
</feature>
<feature type="topological domain" description="Cytoplasmic" evidence="3">
    <location>
        <begin position="150"/>
        <end position="163"/>
    </location>
</feature>
<feature type="transmembrane region" description="Helical" evidence="2">
    <location>
        <begin position="164"/>
        <end position="182"/>
    </location>
</feature>
<feature type="topological domain" description="Periplasmic" evidence="3">
    <location>
        <begin position="183"/>
        <end position="185"/>
    </location>
</feature>
<feature type="transmembrane region" description="Helical" evidence="2">
    <location>
        <begin position="186"/>
        <end position="204"/>
    </location>
</feature>
<feature type="topological domain" description="Cytoplasmic" evidence="3">
    <location>
        <begin position="205"/>
        <end position="214"/>
    </location>
</feature>
<feature type="transmembrane region" description="Helical" evidence="2">
    <location>
        <begin position="215"/>
        <end position="233"/>
    </location>
</feature>
<feature type="topological domain" description="Periplasmic" evidence="3">
    <location>
        <begin position="234"/>
        <end position="236"/>
    </location>
</feature>
<feature type="transmembrane region" description="Helical" evidence="2">
    <location>
        <begin position="237"/>
        <end position="254"/>
    </location>
</feature>
<feature type="topological domain" description="Cytoplasmic" evidence="3">
    <location>
        <begin position="255"/>
        <end position="257"/>
    </location>
</feature>
<feature type="transmembrane region" description="Helical" evidence="2">
    <location>
        <begin position="258"/>
        <end position="276"/>
    </location>
</feature>
<feature type="topological domain" description="Periplasmic" evidence="3">
    <location>
        <begin position="277"/>
        <end position="279"/>
    </location>
</feature>
<evidence type="ECO:0000250" key="1">
    <source>
        <dbReference type="UniProtKB" id="P22610"/>
    </source>
</evidence>
<evidence type="ECO:0000305" key="2"/>
<evidence type="ECO:0000305" key="3">
    <source>
    </source>
</evidence>
<name>LEP4_PECCC</name>
<comment type="function">
    <text evidence="1">Plays a role in type II pseudopili formation by proteolytically removing the leader sequence from substrate proteins and subsequently monomethylating the alpha-amino group of the newly exposed N-terminal phenylalanine. Substrates include proteins required for biogenesis of the type II general secretory apparatus.</text>
</comment>
<comment type="catalytic activity">
    <reaction evidence="1">
        <text>Typically cleaves a -Gly-|-Phe- bond to release an N-terminal, basic peptide of 5-8 residues from type IV prepilin, and then N-methylates the new N-terminal amino group, the methyl donor being S-adenosyl-L-methionine.</text>
        <dbReference type="EC" id="3.4.23.43"/>
    </reaction>
</comment>
<comment type="subcellular location">
    <subcellularLocation>
        <location evidence="1">Cell inner membrane</location>
        <topology evidence="1">Multi-pass membrane protein</topology>
    </subcellularLocation>
</comment>
<comment type="similarity">
    <text evidence="2">Belongs to the peptidase A24 family.</text>
</comment>
<gene>
    <name type="primary">outO</name>
</gene>
<keyword id="KW-0997">Cell inner membrane</keyword>
<keyword id="KW-1003">Cell membrane</keyword>
<keyword id="KW-0378">Hydrolase</keyword>
<keyword id="KW-0472">Membrane</keyword>
<keyword id="KW-0489">Methyltransferase</keyword>
<keyword id="KW-0511">Multifunctional enzyme</keyword>
<keyword id="KW-0645">Protease</keyword>
<keyword id="KW-0949">S-adenosyl-L-methionine</keyword>
<keyword id="KW-0808">Transferase</keyword>
<keyword id="KW-0812">Transmembrane</keyword>
<keyword id="KW-1133">Transmembrane helix</keyword>
<dbReference type="EC" id="3.4.23.43" evidence="1"/>
<dbReference type="EC" id="2.1.1.-" evidence="1"/>
<dbReference type="EMBL" id="X70049">
    <property type="protein sequence ID" value="CAA49656.1"/>
    <property type="molecule type" value="Genomic_DNA"/>
</dbReference>
<dbReference type="PIR" id="S32869">
    <property type="entry name" value="S32869"/>
</dbReference>
<dbReference type="MEROPS" id="A24.A10"/>
<dbReference type="GO" id="GO:0005886">
    <property type="term" value="C:plasma membrane"/>
    <property type="evidence" value="ECO:0007669"/>
    <property type="project" value="UniProtKB-SubCell"/>
</dbReference>
<dbReference type="GO" id="GO:0004190">
    <property type="term" value="F:aspartic-type endopeptidase activity"/>
    <property type="evidence" value="ECO:0007669"/>
    <property type="project" value="UniProtKB-EC"/>
</dbReference>
<dbReference type="GO" id="GO:0008168">
    <property type="term" value="F:methyltransferase activity"/>
    <property type="evidence" value="ECO:0007669"/>
    <property type="project" value="UniProtKB-KW"/>
</dbReference>
<dbReference type="GO" id="GO:0032259">
    <property type="term" value="P:methylation"/>
    <property type="evidence" value="ECO:0007669"/>
    <property type="project" value="UniProtKB-KW"/>
</dbReference>
<dbReference type="GO" id="GO:0006465">
    <property type="term" value="P:signal peptide processing"/>
    <property type="evidence" value="ECO:0007669"/>
    <property type="project" value="TreeGrafter"/>
</dbReference>
<dbReference type="Gene3D" id="1.20.120.1220">
    <property type="match status" value="1"/>
</dbReference>
<dbReference type="InterPro" id="IPR014032">
    <property type="entry name" value="Peptidase_A24A_bac"/>
</dbReference>
<dbReference type="InterPro" id="IPR000045">
    <property type="entry name" value="Prepilin_IV_endopep_pep"/>
</dbReference>
<dbReference type="InterPro" id="IPR010627">
    <property type="entry name" value="Prepilin_pept_A24_N"/>
</dbReference>
<dbReference type="InterPro" id="IPR050882">
    <property type="entry name" value="Prepilin_peptidase/N-MTase"/>
</dbReference>
<dbReference type="PANTHER" id="PTHR30487:SF0">
    <property type="entry name" value="PREPILIN LEADER PEPTIDASE_N-METHYLTRANSFERASE-RELATED"/>
    <property type="match status" value="1"/>
</dbReference>
<dbReference type="PANTHER" id="PTHR30487">
    <property type="entry name" value="TYPE 4 PREPILIN-LIKE PROTEINS LEADER PEPTIDE-PROCESSING ENZYME"/>
    <property type="match status" value="1"/>
</dbReference>
<dbReference type="Pfam" id="PF06750">
    <property type="entry name" value="A24_N_bact"/>
    <property type="match status" value="1"/>
</dbReference>
<dbReference type="Pfam" id="PF01478">
    <property type="entry name" value="Peptidase_A24"/>
    <property type="match status" value="1"/>
</dbReference>
<dbReference type="PRINTS" id="PR00864">
    <property type="entry name" value="PREPILNPTASE"/>
</dbReference>
<protein>
    <recommendedName>
        <fullName>Prepilin leader peptidase/N-methyltransferase</fullName>
    </recommendedName>
    <alternativeName>
        <fullName>Pectic enzymes secretion protein OutO</fullName>
    </alternativeName>
    <domain>
        <recommendedName>
            <fullName>Leader peptidase</fullName>
            <ecNumber evidence="1">3.4.23.43</ecNumber>
        </recommendedName>
        <alternativeName>
            <fullName>Prepilin peptidase</fullName>
        </alternativeName>
    </domain>
    <domain>
        <recommendedName>
            <fullName>N-methyltransferase</fullName>
            <ecNumber evidence="1">2.1.1.-</ecNumber>
        </recommendedName>
    </domain>
</protein>
<organism>
    <name type="scientific">Pectobacterium carotovorum subsp. carotovorum</name>
    <name type="common">Erwinia carotovora subsp. carotovora</name>
    <dbReference type="NCBI Taxonomy" id="555"/>
    <lineage>
        <taxon>Bacteria</taxon>
        <taxon>Pseudomonadati</taxon>
        <taxon>Pseudomonadota</taxon>
        <taxon>Gammaproteobacteria</taxon>
        <taxon>Enterobacterales</taxon>
        <taxon>Pectobacteriaceae</taxon>
        <taxon>Pectobacterium</taxon>
    </lineage>
</organism>
<proteinExistence type="evidence at protein level"/>